<reference key="1">
    <citation type="journal article" date="2003" name="Science">
        <title>Genome of Geobacter sulfurreducens: metal reduction in subsurface environments.</title>
        <authorList>
            <person name="Methe B.A."/>
            <person name="Nelson K.E."/>
            <person name="Eisen J.A."/>
            <person name="Paulsen I.T."/>
            <person name="Nelson W.C."/>
            <person name="Heidelberg J.F."/>
            <person name="Wu D."/>
            <person name="Wu M."/>
            <person name="Ward N.L."/>
            <person name="Beanan M.J."/>
            <person name="Dodson R.J."/>
            <person name="Madupu R."/>
            <person name="Brinkac L.M."/>
            <person name="Daugherty S.C."/>
            <person name="DeBoy R.T."/>
            <person name="Durkin A.S."/>
            <person name="Gwinn M.L."/>
            <person name="Kolonay J.F."/>
            <person name="Sullivan S.A."/>
            <person name="Haft D.H."/>
            <person name="Selengut J."/>
            <person name="Davidsen T.M."/>
            <person name="Zafar N."/>
            <person name="White O."/>
            <person name="Tran B."/>
            <person name="Romero C."/>
            <person name="Forberger H.A."/>
            <person name="Weidman J.F."/>
            <person name="Khouri H.M."/>
            <person name="Feldblyum T.V."/>
            <person name="Utterback T.R."/>
            <person name="Van Aken S.E."/>
            <person name="Lovley D.R."/>
            <person name="Fraser C.M."/>
        </authorList>
    </citation>
    <scope>NUCLEOTIDE SEQUENCE [LARGE SCALE GENOMIC DNA]</scope>
    <source>
        <strain>ATCC 51573 / DSM 12127 / PCA</strain>
    </source>
</reference>
<sequence length="179" mass="20136">MARLKELYHKEIVEQLTKDFGYSNVMQVPKIEKIVVNMGLGEAIQNVKILDSAVEELAAIAGQKAVITKAKKSIAGFKLRQGMPIGCMVTLRREKMYEFLDRLINVALPRVRDFKGVSAKGFDGRGNYSLGVKEQLIFPEINYDKIDKIKGLNITIVTSAKTDEESRALLKHLGMPFRH</sequence>
<accession>Q748Z9</accession>
<protein>
    <recommendedName>
        <fullName evidence="1">Large ribosomal subunit protein uL5</fullName>
    </recommendedName>
    <alternativeName>
        <fullName evidence="2">50S ribosomal protein L5</fullName>
    </alternativeName>
</protein>
<feature type="chain" id="PRO_0000124930" description="Large ribosomal subunit protein uL5">
    <location>
        <begin position="1"/>
        <end position="179"/>
    </location>
</feature>
<organism>
    <name type="scientific">Geobacter sulfurreducens (strain ATCC 51573 / DSM 12127 / PCA)</name>
    <dbReference type="NCBI Taxonomy" id="243231"/>
    <lineage>
        <taxon>Bacteria</taxon>
        <taxon>Pseudomonadati</taxon>
        <taxon>Thermodesulfobacteriota</taxon>
        <taxon>Desulfuromonadia</taxon>
        <taxon>Geobacterales</taxon>
        <taxon>Geobacteraceae</taxon>
        <taxon>Geobacter</taxon>
    </lineage>
</organism>
<proteinExistence type="inferred from homology"/>
<gene>
    <name evidence="1" type="primary">rplE</name>
    <name type="ordered locus">GSU2845</name>
</gene>
<name>RL5_GEOSL</name>
<evidence type="ECO:0000255" key="1">
    <source>
        <dbReference type="HAMAP-Rule" id="MF_01333"/>
    </source>
</evidence>
<evidence type="ECO:0000305" key="2"/>
<comment type="function">
    <text evidence="1">This is one of the proteins that bind and probably mediate the attachment of the 5S RNA into the large ribosomal subunit, where it forms part of the central protuberance. In the 70S ribosome it contacts protein S13 of the 30S subunit (bridge B1b), connecting the 2 subunits; this bridge is implicated in subunit movement. Contacts the P site tRNA; the 5S rRNA and some of its associated proteins might help stabilize positioning of ribosome-bound tRNAs.</text>
</comment>
<comment type="subunit">
    <text evidence="1">Part of the 50S ribosomal subunit; part of the 5S rRNA/L5/L18/L25 subcomplex. Contacts the 5S rRNA and the P site tRNA. Forms a bridge to the 30S subunit in the 70S ribosome.</text>
</comment>
<comment type="similarity">
    <text evidence="1">Belongs to the universal ribosomal protein uL5 family.</text>
</comment>
<keyword id="KW-1185">Reference proteome</keyword>
<keyword id="KW-0687">Ribonucleoprotein</keyword>
<keyword id="KW-0689">Ribosomal protein</keyword>
<keyword id="KW-0694">RNA-binding</keyword>
<keyword id="KW-0699">rRNA-binding</keyword>
<keyword id="KW-0820">tRNA-binding</keyword>
<dbReference type="EMBL" id="AE017180">
    <property type="protein sequence ID" value="AAR36238.1"/>
    <property type="molecule type" value="Genomic_DNA"/>
</dbReference>
<dbReference type="RefSeq" id="NP_953888.1">
    <property type="nucleotide sequence ID" value="NC_002939.5"/>
</dbReference>
<dbReference type="RefSeq" id="WP_010943474.1">
    <property type="nucleotide sequence ID" value="NC_002939.5"/>
</dbReference>
<dbReference type="SMR" id="Q748Z9"/>
<dbReference type="FunCoup" id="Q748Z9">
    <property type="interactions" value="648"/>
</dbReference>
<dbReference type="STRING" id="243231.GSU2845"/>
<dbReference type="EnsemblBacteria" id="AAR36238">
    <property type="protein sequence ID" value="AAR36238"/>
    <property type="gene ID" value="GSU2845"/>
</dbReference>
<dbReference type="KEGG" id="gsu:GSU2845"/>
<dbReference type="PATRIC" id="fig|243231.5.peg.2871"/>
<dbReference type="eggNOG" id="COG0094">
    <property type="taxonomic scope" value="Bacteria"/>
</dbReference>
<dbReference type="HOGENOM" id="CLU_061015_2_1_7"/>
<dbReference type="InParanoid" id="Q748Z9"/>
<dbReference type="OrthoDB" id="9806626at2"/>
<dbReference type="Proteomes" id="UP000000577">
    <property type="component" value="Chromosome"/>
</dbReference>
<dbReference type="GO" id="GO:0022625">
    <property type="term" value="C:cytosolic large ribosomal subunit"/>
    <property type="evidence" value="ECO:0000318"/>
    <property type="project" value="GO_Central"/>
</dbReference>
<dbReference type="GO" id="GO:0003723">
    <property type="term" value="F:RNA binding"/>
    <property type="evidence" value="ECO:0000318"/>
    <property type="project" value="GO_Central"/>
</dbReference>
<dbReference type="GO" id="GO:0019843">
    <property type="term" value="F:rRNA binding"/>
    <property type="evidence" value="ECO:0007669"/>
    <property type="project" value="UniProtKB-UniRule"/>
</dbReference>
<dbReference type="GO" id="GO:0003735">
    <property type="term" value="F:structural constituent of ribosome"/>
    <property type="evidence" value="ECO:0000318"/>
    <property type="project" value="GO_Central"/>
</dbReference>
<dbReference type="GO" id="GO:0000049">
    <property type="term" value="F:tRNA binding"/>
    <property type="evidence" value="ECO:0007669"/>
    <property type="project" value="UniProtKB-UniRule"/>
</dbReference>
<dbReference type="GO" id="GO:0006412">
    <property type="term" value="P:translation"/>
    <property type="evidence" value="ECO:0000318"/>
    <property type="project" value="GO_Central"/>
</dbReference>
<dbReference type="FunFam" id="3.30.1440.10:FF:000001">
    <property type="entry name" value="50S ribosomal protein L5"/>
    <property type="match status" value="1"/>
</dbReference>
<dbReference type="Gene3D" id="3.30.1440.10">
    <property type="match status" value="1"/>
</dbReference>
<dbReference type="HAMAP" id="MF_01333_B">
    <property type="entry name" value="Ribosomal_uL5_B"/>
    <property type="match status" value="1"/>
</dbReference>
<dbReference type="InterPro" id="IPR002132">
    <property type="entry name" value="Ribosomal_uL5"/>
</dbReference>
<dbReference type="InterPro" id="IPR020930">
    <property type="entry name" value="Ribosomal_uL5_bac-type"/>
</dbReference>
<dbReference type="InterPro" id="IPR031309">
    <property type="entry name" value="Ribosomal_uL5_C"/>
</dbReference>
<dbReference type="InterPro" id="IPR020929">
    <property type="entry name" value="Ribosomal_uL5_CS"/>
</dbReference>
<dbReference type="InterPro" id="IPR022803">
    <property type="entry name" value="Ribosomal_uL5_dom_sf"/>
</dbReference>
<dbReference type="InterPro" id="IPR031310">
    <property type="entry name" value="Ribosomal_uL5_N"/>
</dbReference>
<dbReference type="NCBIfam" id="NF000585">
    <property type="entry name" value="PRK00010.1"/>
    <property type="match status" value="1"/>
</dbReference>
<dbReference type="PANTHER" id="PTHR11994">
    <property type="entry name" value="60S RIBOSOMAL PROTEIN L11-RELATED"/>
    <property type="match status" value="1"/>
</dbReference>
<dbReference type="Pfam" id="PF00281">
    <property type="entry name" value="Ribosomal_L5"/>
    <property type="match status" value="1"/>
</dbReference>
<dbReference type="Pfam" id="PF00673">
    <property type="entry name" value="Ribosomal_L5_C"/>
    <property type="match status" value="1"/>
</dbReference>
<dbReference type="PIRSF" id="PIRSF002161">
    <property type="entry name" value="Ribosomal_L5"/>
    <property type="match status" value="1"/>
</dbReference>
<dbReference type="SUPFAM" id="SSF55282">
    <property type="entry name" value="RL5-like"/>
    <property type="match status" value="1"/>
</dbReference>
<dbReference type="PROSITE" id="PS00358">
    <property type="entry name" value="RIBOSOMAL_L5"/>
    <property type="match status" value="1"/>
</dbReference>